<name>UGDH_PONAB</name>
<accession>Q5R7B3</accession>
<keyword id="KW-0007">Acetylation</keyword>
<keyword id="KW-0021">Allosteric enzyme</keyword>
<keyword id="KW-0119">Carbohydrate metabolism</keyword>
<keyword id="KW-0520">NAD</keyword>
<keyword id="KW-0560">Oxidoreductase</keyword>
<keyword id="KW-0597">Phosphoprotein</keyword>
<keyword id="KW-1185">Reference proteome</keyword>
<proteinExistence type="evidence at transcript level"/>
<reference key="1">
    <citation type="submission" date="2004-11" db="EMBL/GenBank/DDBJ databases">
        <authorList>
            <consortium name="The German cDNA consortium"/>
        </authorList>
    </citation>
    <scope>NUCLEOTIDE SEQUENCE [LARGE SCALE MRNA]</scope>
    <source>
        <tissue>Kidney</tissue>
    </source>
</reference>
<sequence>MFEIKKICCIGAGYVGGPTCSVIAHMRPEIRVTVVDVNESRINAWNSPTLPIYEPGLKEVVESCRGKNLFFSTNIDDAIKEADLVFISVNTPTKTYGMGKGRAADLKYIEACARRIVQNSNGYKIVTEKSTVPVRAAESIRRIFDANTKPNLNLQVLSNPEFLAEGTAIKDLKNPDRVLIGGDETPEGQRAVQALCAVYEHWVPREKILTTNTWSSELSKLAANAFLAQRISSINSISALCEATGADVEEVATAIGMDQRIGNKFLKASVGFGGSCFQKDVLNLVYLCEALNLPEVARYWQQVIDMNDYQRRRFASRIIDSLFNTVTDKKIAILGFAFKKDTGDTRESSSIYISKYLMDEGAHLHIYDPKVPREQIVVDLSHPGVSEDDQVSRLVTISKDPYEACDGAHAVVICTEWDMFKELDYERIHKKMLKPAFIFDGRRVLDGLHNELQTIGFQIETIGKKVSSKRIPYAPSGEIPKFSLQDPPNKKPKV</sequence>
<evidence type="ECO:0000250" key="1">
    <source>
        <dbReference type="UniProtKB" id="O60701"/>
    </source>
</evidence>
<evidence type="ECO:0000250" key="2">
    <source>
        <dbReference type="UniProtKB" id="O70475"/>
    </source>
</evidence>
<evidence type="ECO:0000305" key="3"/>
<comment type="function">
    <text evidence="1 2">Catalyzes the formation of UDP-alpha-D-glucuronate, a constituent of complex glycosaminoglycans (By similarity). Required for the biosynthesis of chondroitin sulfate and heparan sulfate. Required for embryonic development via its role in the biosynthesis of glycosaminoglycans (By similarity). Required for proper brain and neuronal development (By similarity).</text>
</comment>
<comment type="catalytic activity">
    <reaction evidence="1">
        <text>UDP-alpha-D-glucose + 2 NAD(+) + H2O = UDP-alpha-D-glucuronate + 2 NADH + 3 H(+)</text>
        <dbReference type="Rhea" id="RHEA:23596"/>
        <dbReference type="ChEBI" id="CHEBI:15377"/>
        <dbReference type="ChEBI" id="CHEBI:15378"/>
        <dbReference type="ChEBI" id="CHEBI:57540"/>
        <dbReference type="ChEBI" id="CHEBI:57945"/>
        <dbReference type="ChEBI" id="CHEBI:58052"/>
        <dbReference type="ChEBI" id="CHEBI:58885"/>
        <dbReference type="EC" id="1.1.1.22"/>
    </reaction>
</comment>
<comment type="activity regulation">
    <text evidence="1">UDP-alpha-D-xylose (UDX) acts as a feedback inhibitor. It binds at the same site as the substrate, but functions as allosteric inhibitor by triggering a conformation change that disrupts the active hexameric ring structure and gives rise to an inactive, horseshoe-shaped hexamer.</text>
</comment>
<comment type="pathway">
    <text evidence="1">Nucleotide-sugar biosynthesis; UDP-alpha-D-glucuronate biosynthesis; UDP-alpha-D-glucuronate from UDP-alpha-D-glucose: step 1/1.</text>
</comment>
<comment type="subunit">
    <text evidence="1">Homohexamer.</text>
</comment>
<comment type="domain">
    <text evidence="1">The protein goes through several conformation states during the reaction cycle, giving rise to hysteresis. In the initial state, the ligand-free protein is in an inactive conformation (E*). Substrate binding triggers a change to the active conformation (E). UDP-xylose binding triggers the transition to a distinct, inhibited conformation. The presence of an intrinsically disordered C-terminus promotes a more dynamic protein structure and favors a conformation with high affinity for UPD-xylose.</text>
</comment>
<comment type="domain">
    <text evidence="1">The allosteric switch region moves by about 5 Angstroms when UDP-xylose is bound, and occupies part of the UDP-glucose binding site. At the same time it promotes domain movements that disrupt the active hexameric ring structure and lead to the formation of a horseshoe-shaped, inactive hexamer.</text>
</comment>
<comment type="similarity">
    <text evidence="3">Belongs to the UDP-glucose/GDP-mannose dehydrogenase family.</text>
</comment>
<protein>
    <recommendedName>
        <fullName>UDP-glucose 6-dehydrogenase</fullName>
        <shortName>UDP-Glc dehydrogenase</shortName>
        <shortName>UDP-GlcDH</shortName>
        <shortName>UDPGDH</shortName>
        <ecNumber evidence="1">1.1.1.22</ecNumber>
    </recommendedName>
</protein>
<gene>
    <name type="primary">UGDH</name>
</gene>
<dbReference type="EC" id="1.1.1.22" evidence="1"/>
<dbReference type="EMBL" id="CR860205">
    <property type="protein sequence ID" value="CAH92347.1"/>
    <property type="molecule type" value="mRNA"/>
</dbReference>
<dbReference type="RefSeq" id="NP_001127543.1">
    <property type="nucleotide sequence ID" value="NM_001134071.1"/>
</dbReference>
<dbReference type="SMR" id="Q5R7B3"/>
<dbReference type="STRING" id="9601.ENSPPYP00000016396"/>
<dbReference type="GeneID" id="100174620"/>
<dbReference type="KEGG" id="pon:100174620"/>
<dbReference type="CTD" id="7358"/>
<dbReference type="eggNOG" id="KOG2666">
    <property type="taxonomic scope" value="Eukaryota"/>
</dbReference>
<dbReference type="InParanoid" id="Q5R7B3"/>
<dbReference type="OrthoDB" id="5059218at2759"/>
<dbReference type="UniPathway" id="UPA00038">
    <property type="reaction ID" value="UER00491"/>
</dbReference>
<dbReference type="Proteomes" id="UP000001595">
    <property type="component" value="Unplaced"/>
</dbReference>
<dbReference type="GO" id="GO:0005634">
    <property type="term" value="C:nucleus"/>
    <property type="evidence" value="ECO:0007669"/>
    <property type="project" value="TreeGrafter"/>
</dbReference>
<dbReference type="GO" id="GO:0051287">
    <property type="term" value="F:NAD binding"/>
    <property type="evidence" value="ECO:0007669"/>
    <property type="project" value="InterPro"/>
</dbReference>
<dbReference type="GO" id="GO:0003979">
    <property type="term" value="F:UDP-glucose 6-dehydrogenase activity"/>
    <property type="evidence" value="ECO:0000250"/>
    <property type="project" value="UniProtKB"/>
</dbReference>
<dbReference type="GO" id="GO:0050650">
    <property type="term" value="P:chondroitin sulfate proteoglycan biosynthetic process"/>
    <property type="evidence" value="ECO:0000250"/>
    <property type="project" value="UniProtKB"/>
</dbReference>
<dbReference type="GO" id="GO:0001702">
    <property type="term" value="P:gastrulation with mouth forming second"/>
    <property type="evidence" value="ECO:0000250"/>
    <property type="project" value="UniProtKB"/>
</dbReference>
<dbReference type="GO" id="GO:0015012">
    <property type="term" value="P:heparan sulfate proteoglycan biosynthetic process"/>
    <property type="evidence" value="ECO:0000250"/>
    <property type="project" value="UniProtKB"/>
</dbReference>
<dbReference type="GO" id="GO:0048666">
    <property type="term" value="P:neuron development"/>
    <property type="evidence" value="ECO:0000250"/>
    <property type="project" value="UniProtKB"/>
</dbReference>
<dbReference type="GO" id="GO:0034214">
    <property type="term" value="P:protein hexamerization"/>
    <property type="evidence" value="ECO:0000250"/>
    <property type="project" value="UniProtKB"/>
</dbReference>
<dbReference type="GO" id="GO:0006065">
    <property type="term" value="P:UDP-glucuronate biosynthetic process"/>
    <property type="evidence" value="ECO:0000250"/>
    <property type="project" value="UniProtKB"/>
</dbReference>
<dbReference type="FunFam" id="1.20.5.100:FF:000001">
    <property type="entry name" value="UDP-glucose 6-dehydrogenase"/>
    <property type="match status" value="1"/>
</dbReference>
<dbReference type="FunFam" id="3.40.50.720:FF:000032">
    <property type="entry name" value="UDP-glucose 6-dehydrogenase"/>
    <property type="match status" value="1"/>
</dbReference>
<dbReference type="FunFam" id="3.40.50.720:FF:000114">
    <property type="entry name" value="UDP-glucose 6-dehydrogenase"/>
    <property type="match status" value="1"/>
</dbReference>
<dbReference type="Gene3D" id="1.20.5.100">
    <property type="entry name" value="Cytochrome c1, transmembrane anchor, C-terminal"/>
    <property type="match status" value="1"/>
</dbReference>
<dbReference type="Gene3D" id="3.40.50.720">
    <property type="entry name" value="NAD(P)-binding Rossmann-like Domain"/>
    <property type="match status" value="2"/>
</dbReference>
<dbReference type="InterPro" id="IPR008927">
    <property type="entry name" value="6-PGluconate_DH-like_C_sf"/>
</dbReference>
<dbReference type="InterPro" id="IPR036291">
    <property type="entry name" value="NAD(P)-bd_dom_sf"/>
</dbReference>
<dbReference type="InterPro" id="IPR017476">
    <property type="entry name" value="UDP-Glc/GDP-Man"/>
</dbReference>
<dbReference type="InterPro" id="IPR014027">
    <property type="entry name" value="UDP-Glc/GDP-Man_DH_C"/>
</dbReference>
<dbReference type="InterPro" id="IPR036220">
    <property type="entry name" value="UDP-Glc/GDP-Man_DH_C_sf"/>
</dbReference>
<dbReference type="InterPro" id="IPR014026">
    <property type="entry name" value="UDP-Glc/GDP-Man_DH_dimer"/>
</dbReference>
<dbReference type="InterPro" id="IPR001732">
    <property type="entry name" value="UDP-Glc/GDP-Man_DH_N"/>
</dbReference>
<dbReference type="InterPro" id="IPR028356">
    <property type="entry name" value="UDPglc_DH_euk"/>
</dbReference>
<dbReference type="NCBIfam" id="TIGR03026">
    <property type="entry name" value="NDP-sugDHase"/>
    <property type="match status" value="1"/>
</dbReference>
<dbReference type="PANTHER" id="PTHR11374:SF59">
    <property type="entry name" value="UDP-GLUCOSE 6-DEHYDROGENASE"/>
    <property type="match status" value="1"/>
</dbReference>
<dbReference type="PANTHER" id="PTHR11374">
    <property type="entry name" value="UDP-GLUCOSE DEHYDROGENASE/UDP-MANNAC DEHYDROGENASE"/>
    <property type="match status" value="1"/>
</dbReference>
<dbReference type="Pfam" id="PF00984">
    <property type="entry name" value="UDPG_MGDP_dh"/>
    <property type="match status" value="1"/>
</dbReference>
<dbReference type="Pfam" id="PF03720">
    <property type="entry name" value="UDPG_MGDP_dh_C"/>
    <property type="match status" value="1"/>
</dbReference>
<dbReference type="Pfam" id="PF03721">
    <property type="entry name" value="UDPG_MGDP_dh_N"/>
    <property type="match status" value="1"/>
</dbReference>
<dbReference type="PIRSF" id="PIRSF500133">
    <property type="entry name" value="UDPglc_DH_euk"/>
    <property type="match status" value="1"/>
</dbReference>
<dbReference type="PIRSF" id="PIRSF000124">
    <property type="entry name" value="UDPglc_GDPman_dh"/>
    <property type="match status" value="1"/>
</dbReference>
<dbReference type="SMART" id="SM00984">
    <property type="entry name" value="UDPG_MGDP_dh_C"/>
    <property type="match status" value="1"/>
</dbReference>
<dbReference type="SUPFAM" id="SSF48179">
    <property type="entry name" value="6-phosphogluconate dehydrogenase C-terminal domain-like"/>
    <property type="match status" value="1"/>
</dbReference>
<dbReference type="SUPFAM" id="SSF51735">
    <property type="entry name" value="NAD(P)-binding Rossmann-fold domains"/>
    <property type="match status" value="1"/>
</dbReference>
<dbReference type="SUPFAM" id="SSF52413">
    <property type="entry name" value="UDP-glucose/GDP-mannose dehydrogenase C-terminal domain"/>
    <property type="match status" value="1"/>
</dbReference>
<feature type="chain" id="PRO_0000317477" description="UDP-glucose 6-dehydrogenase">
    <location>
        <begin position="1"/>
        <end position="494"/>
    </location>
</feature>
<feature type="region of interest" description="Disordered" evidence="1">
    <location>
        <begin position="88"/>
        <end position="110"/>
    </location>
</feature>
<feature type="region of interest" description="Allosteric switch region" evidence="1">
    <location>
        <begin position="129"/>
        <end position="135"/>
    </location>
</feature>
<feature type="region of interest" description="Important for formation of active hexamer structure" evidence="1">
    <location>
        <begin position="321"/>
        <end position="325"/>
    </location>
</feature>
<feature type="region of interest" description="Disordered" evidence="1">
    <location>
        <begin position="466"/>
        <end position="494"/>
    </location>
</feature>
<feature type="active site" description="Proton donor/acceptor" evidence="1">
    <location>
        <position position="161"/>
    </location>
</feature>
<feature type="active site" description="Proton donor/acceptor" evidence="1">
    <location>
        <position position="220"/>
    </location>
</feature>
<feature type="active site" description="Nucleophile" evidence="1">
    <location>
        <position position="276"/>
    </location>
</feature>
<feature type="binding site" evidence="1">
    <location>
        <begin position="11"/>
        <end position="16"/>
    </location>
    <ligand>
        <name>NAD(+)</name>
        <dbReference type="ChEBI" id="CHEBI:57540"/>
    </ligand>
</feature>
<feature type="binding site" evidence="1">
    <location>
        <position position="36"/>
    </location>
    <ligand>
        <name>NAD(+)</name>
        <dbReference type="ChEBI" id="CHEBI:57540"/>
    </ligand>
</feature>
<feature type="binding site" evidence="1">
    <location>
        <position position="41"/>
    </location>
    <ligand>
        <name>NAD(+)</name>
        <dbReference type="ChEBI" id="CHEBI:57540"/>
    </ligand>
</feature>
<feature type="binding site" evidence="1">
    <location>
        <begin position="89"/>
        <end position="93"/>
    </location>
    <ligand>
        <name>NAD(+)</name>
        <dbReference type="ChEBI" id="CHEBI:57540"/>
    </ligand>
</feature>
<feature type="binding site" evidence="1">
    <location>
        <begin position="130"/>
        <end position="132"/>
    </location>
    <ligand>
        <name>NAD(+)</name>
        <dbReference type="ChEBI" id="CHEBI:57540"/>
    </ligand>
</feature>
<feature type="binding site" evidence="1">
    <location>
        <begin position="161"/>
        <end position="165"/>
    </location>
    <ligand>
        <name>substrate</name>
    </ligand>
</feature>
<feature type="binding site" evidence="1">
    <location>
        <position position="165"/>
    </location>
    <ligand>
        <name>NAD(+)</name>
        <dbReference type="ChEBI" id="CHEBI:57540"/>
    </ligand>
</feature>
<feature type="binding site" evidence="1">
    <location>
        <begin position="220"/>
        <end position="224"/>
    </location>
    <ligand>
        <name>substrate</name>
    </ligand>
</feature>
<feature type="binding site" evidence="1">
    <location>
        <position position="260"/>
    </location>
    <ligand>
        <name>substrate</name>
    </ligand>
</feature>
<feature type="binding site" evidence="1">
    <location>
        <begin position="267"/>
        <end position="273"/>
    </location>
    <ligand>
        <name>substrate</name>
    </ligand>
</feature>
<feature type="binding site" evidence="1">
    <location>
        <begin position="276"/>
        <end position="279"/>
    </location>
    <ligand>
        <name>NAD(+)</name>
        <dbReference type="ChEBI" id="CHEBI:57540"/>
    </ligand>
</feature>
<feature type="binding site" evidence="1">
    <location>
        <begin position="338"/>
        <end position="339"/>
    </location>
    <ligand>
        <name>substrate</name>
    </ligand>
</feature>
<feature type="binding site" evidence="1">
    <location>
        <position position="346"/>
    </location>
    <ligand>
        <name>NAD(+)</name>
        <dbReference type="ChEBI" id="CHEBI:57540"/>
    </ligand>
</feature>
<feature type="binding site" evidence="1">
    <location>
        <position position="442"/>
    </location>
    <ligand>
        <name>substrate</name>
    </ligand>
</feature>
<feature type="modified residue" description="N6-acetyllysine" evidence="1">
    <location>
        <position position="107"/>
    </location>
</feature>
<feature type="modified residue" description="Phosphoserine" evidence="1">
    <location>
        <position position="476"/>
    </location>
</feature>
<organism>
    <name type="scientific">Pongo abelii</name>
    <name type="common">Sumatran orangutan</name>
    <name type="synonym">Pongo pygmaeus abelii</name>
    <dbReference type="NCBI Taxonomy" id="9601"/>
    <lineage>
        <taxon>Eukaryota</taxon>
        <taxon>Metazoa</taxon>
        <taxon>Chordata</taxon>
        <taxon>Craniata</taxon>
        <taxon>Vertebrata</taxon>
        <taxon>Euteleostomi</taxon>
        <taxon>Mammalia</taxon>
        <taxon>Eutheria</taxon>
        <taxon>Euarchontoglires</taxon>
        <taxon>Primates</taxon>
        <taxon>Haplorrhini</taxon>
        <taxon>Catarrhini</taxon>
        <taxon>Hominidae</taxon>
        <taxon>Pongo</taxon>
    </lineage>
</organism>